<gene>
    <name evidence="15" type="primary">mabA</name>
    <name evidence="14" type="synonym">fabG1</name>
    <name type="ordered locus">Rv1483</name>
    <name type="ORF">MTCY277.04</name>
</gene>
<reference key="1">
    <citation type="journal article" date="1998" name="Microbiology">
        <title>The mabA gene from the inhA operon of Mycobacterium tuberculosis encodes a 3-ketoacyl reductase that fails to confer isoniazid resistance.</title>
        <authorList>
            <person name="Banerjee A."/>
            <person name="Sugantino M."/>
            <person name="Sacchettini J.C."/>
            <person name="Jacobs W.R. Jr."/>
        </authorList>
    </citation>
    <scope>NUCLEOTIDE SEQUENCE [GENOMIC DNA]</scope>
    <scope>FUNCTION AS A BETA-KETOACYL-COA REDUCTASE</scope>
    <scope>CATALYTIC ACTIVITY</scope>
    <source>
        <strain>ATCC 25618 / H37Rv</strain>
    </source>
</reference>
<reference key="2">
    <citation type="journal article" date="1998" name="Nature">
        <title>Deciphering the biology of Mycobacterium tuberculosis from the complete genome sequence.</title>
        <authorList>
            <person name="Cole S.T."/>
            <person name="Brosch R."/>
            <person name="Parkhill J."/>
            <person name="Garnier T."/>
            <person name="Churcher C.M."/>
            <person name="Harris D.E."/>
            <person name="Gordon S.V."/>
            <person name="Eiglmeier K."/>
            <person name="Gas S."/>
            <person name="Barry C.E. III"/>
            <person name="Tekaia F."/>
            <person name="Badcock K."/>
            <person name="Basham D."/>
            <person name="Brown D."/>
            <person name="Chillingworth T."/>
            <person name="Connor R."/>
            <person name="Davies R.M."/>
            <person name="Devlin K."/>
            <person name="Feltwell T."/>
            <person name="Gentles S."/>
            <person name="Hamlin N."/>
            <person name="Holroyd S."/>
            <person name="Hornsby T."/>
            <person name="Jagels K."/>
            <person name="Krogh A."/>
            <person name="McLean J."/>
            <person name="Moule S."/>
            <person name="Murphy L.D."/>
            <person name="Oliver S."/>
            <person name="Osborne J."/>
            <person name="Quail M.A."/>
            <person name="Rajandream M.A."/>
            <person name="Rogers J."/>
            <person name="Rutter S."/>
            <person name="Seeger K."/>
            <person name="Skelton S."/>
            <person name="Squares S."/>
            <person name="Squares R."/>
            <person name="Sulston J.E."/>
            <person name="Taylor K."/>
            <person name="Whitehead S."/>
            <person name="Barrell B.G."/>
        </authorList>
    </citation>
    <scope>NUCLEOTIDE SEQUENCE [LARGE SCALE GENOMIC DNA]</scope>
    <source>
        <strain>ATCC 25618 / H37Rv</strain>
    </source>
</reference>
<reference key="3">
    <citation type="journal article" date="2002" name="Microbiology">
        <title>MabA (FabG1), a Mycobacterium tuberculosis protein involved in the long-chain fatty acid elongation system FAS-II.</title>
        <authorList>
            <person name="Marrakchi H."/>
            <person name="Ducasse S."/>
            <person name="Labesse G."/>
            <person name="Montrozier H."/>
            <person name="Margeat E."/>
            <person name="Emorine L."/>
            <person name="Charpentier X."/>
            <person name="Daffe M."/>
            <person name="Quemard A."/>
        </authorList>
    </citation>
    <scope>FUNCTION IN MYCOLIC ACID BIOSYNTHESIS</scope>
    <scope>CATALYTIC ACTIVITY</scope>
    <scope>MASS SPECTROMETRY</scope>
    <scope>SUBSTRATE SPECIFICITY</scope>
    <scope>BIOPHYSICOCHEMICAL PROPERTIES</scope>
    <scope>PATHWAY</scope>
    <scope>SUBUNIT</scope>
    <scope>SUBCELLULAR LOCATION</scope>
    <source>
        <strain>H37Rv</strain>
    </source>
</reference>
<reference key="4">
    <citation type="journal article" date="2004" name="Antimicrob. Agents Chemother.">
        <title>In vitro inhibition of the Mycobacterium tuberculosis beta-ketoacyl-acyl carrier protein reductase MabA by isoniazid.</title>
        <authorList>
            <person name="Ducasse-Cabanot S."/>
            <person name="Cohen-Gonsaud M."/>
            <person name="Marrakchi H."/>
            <person name="Nguyen M."/>
            <person name="Zerbib D."/>
            <person name="Bernadou J."/>
            <person name="Daffe M."/>
            <person name="Labesse G."/>
            <person name="Quemard A."/>
        </authorList>
    </citation>
    <scope>ACTIVITY REGULATION</scope>
    <scope>MUTAGENESIS OF TYR-185</scope>
</reference>
<reference key="5">
    <citation type="journal article" date="2006" name="Biochemistry">
        <title>Mycobacterium tuberculosis beta-ketoacyl-acyl carrier protein (ACP) reductase: kinetic and chemical mechanisms.</title>
        <authorList>
            <person name="Silva R.G."/>
            <person name="de Carvalho L.P."/>
            <person name="Blanchard J.S."/>
            <person name="Santos D.S."/>
            <person name="Basso L.A."/>
        </authorList>
    </citation>
    <scope>FUNCTION</scope>
    <scope>CATALYTIC ACTIVITY</scope>
    <scope>REACTION MECHANISM</scope>
    <scope>BIOPHYSICOCHEMICAL PROPERTIES</scope>
    <scope>SUBUNIT</scope>
</reference>
<reference key="6">
    <citation type="journal article" date="2008" name="Arch. Biochem. Biophys.">
        <title>Mycobacterium tuberculosis beta-ketoacyl-ACP reductase: alpha-secondary kinetic isotope effects and kinetic and equilibrium mechanisms of substrate binding.</title>
        <authorList>
            <person name="Silva R.G."/>
            <person name="Rosado L.A."/>
            <person name="Santos D.S."/>
            <person name="Basso L.A."/>
        </authorList>
    </citation>
    <scope>FUNCTION</scope>
    <scope>CATALYTIC ACTIVITY</scope>
    <scope>REACTION MECHANISM</scope>
    <scope>SUBUNIT</scope>
</reference>
<reference key="7">
    <citation type="journal article" date="2009" name="Mol. Genet. Genomics">
        <title>The essential mycobacterial genes, fabG1 and fabG4, encode 3-oxoacyl-thioester reductases that are functional in yeast mitochondrial fatty acid synthase type 2.</title>
        <authorList>
            <person name="Gurvitz A."/>
        </authorList>
    </citation>
    <scope>FUNCTION AS A BETA-KETOACYL-ACP REDUCTASE</scope>
    <scope>CATALYTIC ACTIVITY</scope>
</reference>
<reference key="8">
    <citation type="journal article" date="2010" name="J. Biol. Chem.">
        <title>Phosphorylation of the Mycobacterium tuberculosis beta-ketoacyl-acyl carrier protein reductase MabA regulates mycolic acid biosynthesis.</title>
        <authorList>
            <person name="Veyron-Churlet R."/>
            <person name="Zanella-Cleon I."/>
            <person name="Cohen-Gonsaud M."/>
            <person name="Molle V."/>
            <person name="Kremer L."/>
        </authorList>
    </citation>
    <scope>PHOSPHORYLATION AT THR-21; THR-114 AND THR-191</scope>
    <scope>ACTIVITY REGULATION</scope>
    <scope>PATHWAY</scope>
    <scope>MUTAGENESIS OF THR-21; THR-114 AND THR-191</scope>
</reference>
<reference key="9">
    <citation type="journal article" date="2011" name="Mol. Cell. Proteomics">
        <title>Proteogenomic analysis of Mycobacterium tuberculosis by high resolution mass spectrometry.</title>
        <authorList>
            <person name="Kelkar D.S."/>
            <person name="Kumar D."/>
            <person name="Kumar P."/>
            <person name="Balakrishnan L."/>
            <person name="Muthusamy B."/>
            <person name="Yadav A.K."/>
            <person name="Shrivastava P."/>
            <person name="Marimuthu A."/>
            <person name="Anand S."/>
            <person name="Sundaram H."/>
            <person name="Kingsbury R."/>
            <person name="Harsha H.C."/>
            <person name="Nair B."/>
            <person name="Prasad T.S."/>
            <person name="Chauhan D.S."/>
            <person name="Katoch K."/>
            <person name="Katoch V.M."/>
            <person name="Kumar P."/>
            <person name="Chaerkady R."/>
            <person name="Ramachandran S."/>
            <person name="Dash D."/>
            <person name="Pandey A."/>
        </authorList>
    </citation>
    <scope>ACETYLATION [LARGE SCALE ANALYSIS] AT THR-2</scope>
    <scope>CLEAVAGE OF INITIATOR METHIONINE [LARGE SCALE ANALYSIS]</scope>
    <scope>IDENTIFICATION BY MASS SPECTROMETRY [LARGE SCALE ANALYSIS]</scope>
    <source>
        <strain>ATCC 25618 / H37Rv</strain>
    </source>
</reference>
<reference key="10">
    <citation type="journal article" date="2012" name="BMC Res. Notes">
        <title>Role of Serine140 in the mode of action of Mycobacterium tuberculosis beta-ketoacyl-ACP Reductase (MabA).</title>
        <authorList>
            <person name="Rosado L.A."/>
            <person name="Caceres R.A."/>
            <person name="de Azevedo W.F. Jr."/>
            <person name="Basso L.A."/>
            <person name="Santos D.S."/>
        </authorList>
    </citation>
    <scope>MUTAGENESIS OF SER-140</scope>
</reference>
<reference key="11">
    <citation type="journal article" date="2002" name="J. Mol. Biol.">
        <title>Crystal structure of MabA from Mycobacterium tuberculosis, a reductase involved in long-chain fatty acid biosynthesis.</title>
        <authorList>
            <person name="Cohen-Gonsaud M."/>
            <person name="Ducasse S."/>
            <person name="Hoh F."/>
            <person name="Zerbib D."/>
            <person name="Labesse G."/>
            <person name="Quemard A."/>
        </authorList>
    </citation>
    <scope>X-RAY CRYSTALLOGRAPHY (2.0 ANGSTROMS) OF WILD-TYPE AND MUTANT VAL-60</scope>
    <scope>MUTAGENESIS OF CYS-60</scope>
    <scope>SUBUNIT</scope>
    <scope>NOMENCLATURE</scope>
</reference>
<reference evidence="20 21 22" key="12">
    <citation type="journal article" date="2005" name="Proteins">
        <title>Ligand-induced fit in mycobacterial MabA: the sequence-specific C-terminus locks the conformational change.</title>
        <authorList>
            <person name="Cohen-Gonsaud M."/>
            <person name="Ducasse-Cabanot S."/>
            <person name="Quemard A."/>
            <person name="Labesse G."/>
        </authorList>
    </citation>
    <scope>X-RAY CRYSTALLOGRAPHY (2.0 ANGSTROMS) OF APOENZYME; MUTANT VAL-60 AND MUTANT VAL-60/LEU-144 IN COMPLEX WITH NADP</scope>
    <scope>SUBUNIT</scope>
    <scope>DOMAIN</scope>
    <scope>MUTAGENESIS OF CYS-60; GLY-139 AND SER-144</scope>
</reference>
<reference evidence="23" key="13">
    <citation type="journal article" date="2007" name="Acta Crystallogr. D">
        <title>Lack of dynamics in the MabA active site kills the enzyme activity: practical consequences for drug-design studies.</title>
        <authorList>
            <person name="Poncet-Montange G."/>
            <person name="Ducasse-Cabanot S."/>
            <person name="Quemard A."/>
            <person name="Labesse G."/>
            <person name="Cohen-Gonsaud M."/>
        </authorList>
    </citation>
    <scope>X-RAY CRYSTALLOGRAPHY (2.3 ANGSTROMS) OF MUTANT VAL-60/ALA-139/LEU-144</scope>
    <scope>MUTAGENESIS OF CYS-60; GLY-139 AND SER-144</scope>
    <scope>SUBUNIT</scope>
</reference>
<keyword id="KW-0002">3D-structure</keyword>
<keyword id="KW-0007">Acetylation</keyword>
<keyword id="KW-0134">Cell wall</keyword>
<keyword id="KW-0275">Fatty acid biosynthesis</keyword>
<keyword id="KW-0276">Fatty acid metabolism</keyword>
<keyword id="KW-0444">Lipid biosynthesis</keyword>
<keyword id="KW-0443">Lipid metabolism</keyword>
<keyword id="KW-0521">NADP</keyword>
<keyword id="KW-0560">Oxidoreductase</keyword>
<keyword id="KW-0597">Phosphoprotein</keyword>
<keyword id="KW-1185">Reference proteome</keyword>
<keyword id="KW-0964">Secreted</keyword>
<accession>P9WGT3</accession>
<accession>L0T9R6</accession>
<accession>P0A5Y4</accession>
<accession>P71764</accession>
<accession>Q48930</accession>
<protein>
    <recommendedName>
        <fullName evidence="16">3-oxoacyl-[acyl-carrier-protein] reductase MabA</fullName>
        <ecNumber evidence="18">1.1.1.100</ecNumber>
    </recommendedName>
    <alternativeName>
        <fullName evidence="15">3-ketoacyl reductase</fullName>
    </alternativeName>
    <alternativeName>
        <fullName>3-ketoacyl-acyl carrier protein reductase</fullName>
    </alternativeName>
    <alternativeName>
        <fullName>Acetoacetyl-CoA reductase</fullName>
        <ecNumber evidence="3 7 9 13">1.1.1.36</ecNumber>
    </alternativeName>
    <alternativeName>
        <fullName>Beta-ketoacyl-acyl carrier protein reductase</fullName>
        <shortName evidence="14">Beta-ketoacyl-ACP reductase</shortName>
    </alternativeName>
    <alternativeName>
        <fullName evidence="15">Mycolic acid biosynthesis A</fullName>
    </alternativeName>
</protein>
<comment type="function">
    <text evidence="3 7 9 10 13">Part of the mycobacterial fatty acid elongation system FAS-II, which is involved in mycolic acid biosynthesis (PubMed:11932442). Catalyzes the NADPH-dependent reduction of beta-ketoacyl derivatives, the second step of the FAS-II elongation cycle (PubMed:11932442, PubMed:17059223, PubMed:18155153, PubMed:19685079, PubMed:9802011). May preferentially metabolize long-chain substrates (C8-C20) (PubMed:11932442). Can use CoA derivatives as substrates in vitro (PubMed:11932442, PubMed:17059223, PubMed:18155153, PubMed:9802011).</text>
</comment>
<comment type="catalytic activity">
    <reaction evidence="18">
        <text>a (3R)-hydroxyacyl-[ACP] + NADP(+) = a 3-oxoacyl-[ACP] + NADPH + H(+)</text>
        <dbReference type="Rhea" id="RHEA:17397"/>
        <dbReference type="Rhea" id="RHEA-COMP:9916"/>
        <dbReference type="Rhea" id="RHEA-COMP:9945"/>
        <dbReference type="ChEBI" id="CHEBI:15378"/>
        <dbReference type="ChEBI" id="CHEBI:57783"/>
        <dbReference type="ChEBI" id="CHEBI:58349"/>
        <dbReference type="ChEBI" id="CHEBI:78776"/>
        <dbReference type="ChEBI" id="CHEBI:78827"/>
        <dbReference type="EC" id="1.1.1.100"/>
    </reaction>
    <physiologicalReaction direction="right-to-left" evidence="18">
        <dbReference type="Rhea" id="RHEA:17399"/>
    </physiologicalReaction>
</comment>
<comment type="catalytic activity">
    <reaction evidence="3 7 9 13">
        <text>a (3R)-3-hydroxyacyl-CoA + NADP(+) = a 3-oxoacyl-CoA + NADPH + H(+)</text>
        <dbReference type="Rhea" id="RHEA:22256"/>
        <dbReference type="ChEBI" id="CHEBI:15378"/>
        <dbReference type="ChEBI" id="CHEBI:57319"/>
        <dbReference type="ChEBI" id="CHEBI:57783"/>
        <dbReference type="ChEBI" id="CHEBI:58349"/>
        <dbReference type="ChEBI" id="CHEBI:90726"/>
        <dbReference type="EC" id="1.1.1.36"/>
    </reaction>
    <physiologicalReaction direction="right-to-left" evidence="3 7 9 13">
        <dbReference type="Rhea" id="RHEA:22258"/>
    </physiologicalReaction>
</comment>
<comment type="catalytic activity">
    <reaction evidence="3 7 9 13">
        <text>(3R)-3-hydroxybutanoyl-CoA + NADP(+) = acetoacetyl-CoA + NADPH + H(+)</text>
        <dbReference type="Rhea" id="RHEA:45796"/>
        <dbReference type="ChEBI" id="CHEBI:15378"/>
        <dbReference type="ChEBI" id="CHEBI:57286"/>
        <dbReference type="ChEBI" id="CHEBI:57315"/>
        <dbReference type="ChEBI" id="CHEBI:57783"/>
        <dbReference type="ChEBI" id="CHEBI:58349"/>
    </reaction>
    <physiologicalReaction direction="right-to-left" evidence="3 7 9 13">
        <dbReference type="Rhea" id="RHEA:45798"/>
    </physiologicalReaction>
</comment>
<comment type="catalytic activity">
    <reaction evidence="3">
        <text>(3R)-hydroxyoctanoyl-CoA + NADP(+) = 3-oxooctanoyl-CoA + NADPH + H(+)</text>
        <dbReference type="Rhea" id="RHEA:45844"/>
        <dbReference type="ChEBI" id="CHEBI:15378"/>
        <dbReference type="ChEBI" id="CHEBI:57783"/>
        <dbReference type="ChEBI" id="CHEBI:58349"/>
        <dbReference type="ChEBI" id="CHEBI:62619"/>
        <dbReference type="ChEBI" id="CHEBI:74279"/>
    </reaction>
    <physiologicalReaction direction="right-to-left" evidence="3">
        <dbReference type="Rhea" id="RHEA:45846"/>
    </physiologicalReaction>
</comment>
<comment type="catalytic activity">
    <reaction evidence="3">
        <text>(3R)-3-hydroxydodecanoyl-CoA + NADP(+) = 3-oxododecanoyl-CoA + NADPH + H(+)</text>
        <dbReference type="Rhea" id="RHEA:45848"/>
        <dbReference type="ChEBI" id="CHEBI:15378"/>
        <dbReference type="ChEBI" id="CHEBI:57783"/>
        <dbReference type="ChEBI" id="CHEBI:58349"/>
        <dbReference type="ChEBI" id="CHEBI:62615"/>
        <dbReference type="ChEBI" id="CHEBI:74276"/>
    </reaction>
    <physiologicalReaction direction="right-to-left" evidence="3">
        <dbReference type="Rhea" id="RHEA:45850"/>
    </physiologicalReaction>
</comment>
<comment type="activity regulation">
    <text evidence="5 11">Phosphorylation alters the activity, and subsequently mycolic acid biosynthesis (PubMed:20178986). In vitro, activity is efficiently inhibited by isoniazid. Acts by forming an isonicotinoyl-NADP adduct that binds to the MabA active site (PubMed:14693546).</text>
</comment>
<comment type="biophysicochemical properties">
    <kinetics>
        <KM evidence="3">8.3 uM for beta-ketododecanoyl-CoA (at 25 degrees Celsius and at pH 7.0)</KM>
        <KM evidence="3">70 uM for beta-ketooctanoyl-CoA (at 25 degrees Celsius and at pH 7.0)</KM>
        <KM evidence="3">1530 uM for acetoacetyl-CoA (at 25 degrees Celsius and at pH 7.0)</KM>
        <KM evidence="7">165 uM for acetoacetyl-CoA</KM>
        <KM evidence="3">41 uM for NADPH (at 25 degrees Celsius and at pH 7.0)</KM>
        <KM evidence="7">26 uM for NADPH</KM>
        <text evidence="3 7">kcat is 4.3 sec(-1) with beta-ketododecanoyl-CoA as substrate. kcat is 3.5 sec(-1) with beta-ketooctanoyl-CoA as substrate. kcat is 1.9 sec(-1) with acetoacetyl-CoA as substrate. kcat is 2.6 sec(-1) with NADPH as substrate (PubMed:11932442). kcat is 7 sec(-1) with acetoacetyl-CoA as substrate (PubMed:17059223).</text>
    </kinetics>
</comment>
<comment type="pathway">
    <text evidence="11 17">Lipid metabolism; mycolic acid biosynthesis.</text>
</comment>
<comment type="subunit">
    <text evidence="3 4 6 7 8 9">Homotetramer (PubMed:11932442, PubMed:12079383, PubMed:15977159, PubMed:17642518). Homodimer in solution (PubMed:17059223, PubMed:18155153).</text>
</comment>
<comment type="subcellular location">
    <subcellularLocation>
        <location evidence="3">Secreted</location>
        <location evidence="3">Cell wall</location>
    </subcellularLocation>
</comment>
<comment type="domain">
    <text evidence="6">Shows a significant rearrangement of the active site between a closed inactive conformation and an open and active form in presence of NADP. The C-terminus adopts a particular conformation that locks the conformational changes.</text>
</comment>
<comment type="PTM">
    <text evidence="11">Efficiently phosphorylated in vitro by several M.tuberculosis Ser/Thr protein kinases (STPKs), including PknA, PknB, PknD, PknE, and PknL. Thr-191 represents the primary phosphorylation site in vivo.</text>
</comment>
<comment type="mass spectrometry">
    <text>Recombinant protein expressed in E.coli.</text>
</comment>
<comment type="miscellaneous">
    <text evidence="10">Restores respiratory growth of S.cerevisiae oar1 deletion mutant.</text>
</comment>
<comment type="similarity">
    <text evidence="16">Belongs to the short-chain dehydrogenases/reductases (SDR) family.</text>
</comment>
<feature type="initiator methionine" description="Removed" evidence="3 24">
    <location>
        <position position="1"/>
    </location>
</feature>
<feature type="chain" id="PRO_0000054677" description="3-oxoacyl-[acyl-carrier-protein] reductase MabA">
    <location>
        <begin position="2"/>
        <end position="247"/>
    </location>
</feature>
<feature type="active site" description="Proton acceptor" evidence="2">
    <location>
        <position position="153"/>
    </location>
</feature>
<feature type="binding site" evidence="6 22">
    <location>
        <begin position="25"/>
        <end position="27"/>
    </location>
    <ligand>
        <name>NADP(+)</name>
        <dbReference type="ChEBI" id="CHEBI:58349"/>
    </ligand>
</feature>
<feature type="binding site" evidence="6 22">
    <location>
        <position position="47"/>
    </location>
    <ligand>
        <name>NADP(+)</name>
        <dbReference type="ChEBI" id="CHEBI:58349"/>
    </ligand>
</feature>
<feature type="binding site" evidence="6 22">
    <location>
        <begin position="61"/>
        <end position="62"/>
    </location>
    <ligand>
        <name>NADP(+)</name>
        <dbReference type="ChEBI" id="CHEBI:58349"/>
    </ligand>
</feature>
<feature type="binding site" evidence="6 22">
    <location>
        <position position="90"/>
    </location>
    <ligand>
        <name>NADP(+)</name>
        <dbReference type="ChEBI" id="CHEBI:58349"/>
    </ligand>
</feature>
<feature type="binding site" evidence="1">
    <location>
        <position position="153"/>
    </location>
    <ligand>
        <name>NADP(+)</name>
        <dbReference type="ChEBI" id="CHEBI:58349"/>
    </ligand>
</feature>
<feature type="binding site" evidence="1">
    <location>
        <position position="157"/>
    </location>
    <ligand>
        <name>NADP(+)</name>
        <dbReference type="ChEBI" id="CHEBI:58349"/>
    </ligand>
</feature>
<feature type="binding site" evidence="1">
    <location>
        <position position="186"/>
    </location>
    <ligand>
        <name>NADP(+)</name>
        <dbReference type="ChEBI" id="CHEBI:58349"/>
    </ligand>
</feature>
<feature type="binding site" evidence="1">
    <location>
        <position position="197"/>
    </location>
    <ligand>
        <name>NADP(+)</name>
        <dbReference type="ChEBI" id="CHEBI:58349"/>
    </ligand>
</feature>
<feature type="site" description="Important for activity" evidence="19">
    <location>
        <position position="140"/>
    </location>
</feature>
<feature type="modified residue" description="N-acetylthreonine" evidence="24">
    <location>
        <position position="2"/>
    </location>
</feature>
<feature type="modified residue" description="Phosphothreonine" evidence="11">
    <location>
        <position position="21"/>
    </location>
</feature>
<feature type="modified residue" description="Phosphothreonine" evidence="11">
    <location>
        <position position="114"/>
    </location>
</feature>
<feature type="modified residue" description="Phosphothreonine" evidence="11">
    <location>
        <position position="191"/>
    </location>
</feature>
<feature type="mutagenesis site" description="Slight decrease in phosphorylation by PknB. Lack of phosphorylation by PknB; when associated with A-114 and A-191." evidence="11">
    <original>T</original>
    <variation>A</variation>
    <location>
        <position position="21"/>
    </location>
</feature>
<feature type="mutagenesis site" description="Displays a lower activity than the wild-type and a slightly decreased affinity for the cofactor. Retains 84% of activity; when associated with L-144. Totally inactive; when associated with A-139 and L-144." evidence="4 6 8">
    <original>C</original>
    <variation>V</variation>
    <location>
        <position position="60"/>
    </location>
</feature>
<feature type="mutagenesis site" description="Slight decrease in phosphorylation by PknB. Lack of phosphorylation by PknB; when associated with A-21 and A-191." evidence="11">
    <original>T</original>
    <variation>A</variation>
    <location>
        <position position="114"/>
    </location>
</feature>
<feature type="mutagenesis site" description="Complete protein inactivation and freezes the catalytic site into its closed form. Totally inactive; when associated with V-60 and L-144." evidence="6 8">
    <original>G</original>
    <variation>A</variation>
    <location>
        <position position="139"/>
    </location>
</feature>
<feature type="mutagenesis site" description="Loss of activity. Can still bind NADPH." evidence="12">
    <original>S</original>
    <variation>A</variation>
    <location>
        <position position="140"/>
    </location>
</feature>
<feature type="mutagenesis site" description="Loss of activity. Impaired NADPH binding." evidence="12">
    <original>S</original>
    <variation>T</variation>
    <location>
        <position position="140"/>
    </location>
</feature>
<feature type="mutagenesis site" description="Stabilizes the catalytic loop in its open active form. Retains 84% of activity; when associated with V-60. Totally inactive; when associated with V-60 and A-139." evidence="6 8">
    <original>S</original>
    <variation>L</variation>
    <location>
        <position position="144"/>
    </location>
</feature>
<feature type="mutagenesis site" description="70% decrease in activity with acetoacetyl-CoA as substrate. Does not affect NADP binding." evidence="5">
    <original>Y</original>
    <variation>L</variation>
    <location>
        <position position="185"/>
    </location>
</feature>
<feature type="mutagenesis site" description="Retains 22% of wild-type reductase activity. Strong decrease in phosphorylation by PknB. Lack of phosphorylation by PknB; when associated with A-21 and A-114." evidence="11">
    <original>T</original>
    <variation>A</variation>
    <location>
        <position position="191"/>
    </location>
</feature>
<feature type="mutagenesis site" description="Phosphomimetic mutant that retains less than 10% of wild-type reductase activity. Impaired NADPH binding. Overproduction of the mutant leads to a significant inhibition of de novo biosynthesis of mycolic acids." evidence="11">
    <original>T</original>
    <variation>D</variation>
    <location>
        <position position="191"/>
    </location>
</feature>
<feature type="strand" evidence="25">
    <location>
        <begin position="17"/>
        <end position="20"/>
    </location>
</feature>
<feature type="turn" evidence="25">
    <location>
        <begin position="21"/>
        <end position="24"/>
    </location>
</feature>
<feature type="helix" evidence="25">
    <location>
        <begin position="26"/>
        <end position="37"/>
    </location>
</feature>
<feature type="strand" evidence="25">
    <location>
        <begin position="41"/>
        <end position="49"/>
    </location>
</feature>
<feature type="strand" evidence="25">
    <location>
        <begin position="55"/>
        <end position="59"/>
    </location>
</feature>
<feature type="helix" evidence="25">
    <location>
        <begin position="65"/>
        <end position="79"/>
    </location>
</feature>
<feature type="strand" evidence="25">
    <location>
        <begin position="83"/>
        <end position="88"/>
    </location>
</feature>
<feature type="turn" evidence="26">
    <location>
        <begin position="97"/>
        <end position="99"/>
    </location>
</feature>
<feature type="helix" evidence="25">
    <location>
        <begin position="102"/>
        <end position="112"/>
    </location>
</feature>
<feature type="helix" evidence="25">
    <location>
        <begin position="114"/>
        <end position="129"/>
    </location>
</feature>
<feature type="strand" evidence="25">
    <location>
        <begin position="133"/>
        <end position="138"/>
    </location>
</feature>
<feature type="helix" evidence="26">
    <location>
        <begin position="142"/>
        <end position="145"/>
    </location>
</feature>
<feature type="helix" evidence="25">
    <location>
        <begin position="151"/>
        <end position="171"/>
    </location>
</feature>
<feature type="helix" evidence="25">
    <location>
        <begin position="172"/>
        <end position="174"/>
    </location>
</feature>
<feature type="strand" evidence="25">
    <location>
        <begin position="176"/>
        <end position="183"/>
    </location>
</feature>
<feature type="helix" evidence="25">
    <location>
        <begin position="189"/>
        <end position="193"/>
    </location>
</feature>
<feature type="helix" evidence="25">
    <location>
        <begin position="196"/>
        <end position="202"/>
    </location>
</feature>
<feature type="helix" evidence="25">
    <location>
        <begin position="203"/>
        <end position="205"/>
    </location>
</feature>
<feature type="helix" evidence="25">
    <location>
        <begin position="214"/>
        <end position="225"/>
    </location>
</feature>
<feature type="helix" evidence="25">
    <location>
        <begin position="227"/>
        <end position="229"/>
    </location>
</feature>
<feature type="strand" evidence="25">
    <location>
        <begin position="236"/>
        <end position="240"/>
    </location>
</feature>
<feature type="turn" evidence="25">
    <location>
        <begin position="241"/>
        <end position="244"/>
    </location>
</feature>
<dbReference type="EC" id="1.1.1.100" evidence="18"/>
<dbReference type="EC" id="1.1.1.36" evidence="3 7 9 13"/>
<dbReference type="EMBL" id="U66801">
    <property type="protein sequence ID" value="AAC69639.1"/>
    <property type="molecule type" value="Genomic_DNA"/>
</dbReference>
<dbReference type="EMBL" id="AL123456">
    <property type="protein sequence ID" value="CCP44243.1"/>
    <property type="molecule type" value="Genomic_DNA"/>
</dbReference>
<dbReference type="PIR" id="F70710">
    <property type="entry name" value="F70710"/>
</dbReference>
<dbReference type="RefSeq" id="NP_215999.1">
    <property type="nucleotide sequence ID" value="NC_000962.3"/>
</dbReference>
<dbReference type="RefSeq" id="WP_003898892.1">
    <property type="nucleotide sequence ID" value="NZ_NVQJ01000004.1"/>
</dbReference>
<dbReference type="PDB" id="1UZL">
    <property type="method" value="X-ray"/>
    <property type="resolution" value="2.00 A"/>
    <property type="chains" value="A/B=1-247"/>
</dbReference>
<dbReference type="PDB" id="1UZM">
    <property type="method" value="X-ray"/>
    <property type="resolution" value="1.49 A"/>
    <property type="chains" value="A/B=1-247"/>
</dbReference>
<dbReference type="PDB" id="1UZN">
    <property type="method" value="X-ray"/>
    <property type="resolution" value="1.91 A"/>
    <property type="chains" value="A/B=1-247"/>
</dbReference>
<dbReference type="PDB" id="2NTN">
    <property type="method" value="X-ray"/>
    <property type="resolution" value="2.30 A"/>
    <property type="chains" value="A/B=1-247"/>
</dbReference>
<dbReference type="PDBsum" id="1UZL"/>
<dbReference type="PDBsum" id="1UZM"/>
<dbReference type="PDBsum" id="1UZN"/>
<dbReference type="PDBsum" id="2NTN"/>
<dbReference type="SMR" id="P9WGT3"/>
<dbReference type="FunCoup" id="P9WGT3">
    <property type="interactions" value="124"/>
</dbReference>
<dbReference type="STRING" id="83332.Rv1483"/>
<dbReference type="SwissLipids" id="SLP:000001159"/>
<dbReference type="iPTMnet" id="P9WGT3"/>
<dbReference type="PaxDb" id="83332-Rv1483"/>
<dbReference type="DNASU" id="886551"/>
<dbReference type="GeneID" id="45425462"/>
<dbReference type="GeneID" id="886551"/>
<dbReference type="KEGG" id="mtu:Rv1483"/>
<dbReference type="KEGG" id="mtv:RVBD_1483"/>
<dbReference type="TubercuList" id="Rv1483"/>
<dbReference type="eggNOG" id="COG1028">
    <property type="taxonomic scope" value="Bacteria"/>
</dbReference>
<dbReference type="InParanoid" id="P9WGT3"/>
<dbReference type="OrthoDB" id="9804774at2"/>
<dbReference type="PhylomeDB" id="P9WGT3"/>
<dbReference type="BRENDA" id="1.1.1.100">
    <property type="organism ID" value="3445"/>
</dbReference>
<dbReference type="UniPathway" id="UPA00915"/>
<dbReference type="EvolutionaryTrace" id="P9WGT3"/>
<dbReference type="Proteomes" id="UP000001584">
    <property type="component" value="Chromosome"/>
</dbReference>
<dbReference type="GO" id="GO:0005576">
    <property type="term" value="C:extracellular region"/>
    <property type="evidence" value="ECO:0007669"/>
    <property type="project" value="UniProtKB-KW"/>
</dbReference>
<dbReference type="GO" id="GO:0005886">
    <property type="term" value="C:plasma membrane"/>
    <property type="evidence" value="ECO:0007005"/>
    <property type="project" value="MTBBASE"/>
</dbReference>
<dbReference type="GO" id="GO:0004316">
    <property type="term" value="F:3-oxoacyl-[acyl-carrier-protein] reductase (NADPH) activity"/>
    <property type="evidence" value="ECO:0000314"/>
    <property type="project" value="MTBBASE"/>
</dbReference>
<dbReference type="GO" id="GO:0018454">
    <property type="term" value="F:acetoacetyl-CoA reductase activity"/>
    <property type="evidence" value="ECO:0000314"/>
    <property type="project" value="MTBBASE"/>
</dbReference>
<dbReference type="GO" id="GO:0070402">
    <property type="term" value="F:NADPH binding"/>
    <property type="evidence" value="ECO:0000314"/>
    <property type="project" value="UniProtKB"/>
</dbReference>
<dbReference type="GO" id="GO:0071768">
    <property type="term" value="P:mycolic acid biosynthetic process"/>
    <property type="evidence" value="ECO:0000314"/>
    <property type="project" value="MTBBASE"/>
</dbReference>
<dbReference type="GO" id="GO:0046459">
    <property type="term" value="P:short-chain fatty acid metabolic process"/>
    <property type="evidence" value="ECO:0000314"/>
    <property type="project" value="MTBBASE"/>
</dbReference>
<dbReference type="CDD" id="cd05333">
    <property type="entry name" value="BKR_SDR_c"/>
    <property type="match status" value="1"/>
</dbReference>
<dbReference type="FunFam" id="3.40.50.720:FF:000460">
    <property type="entry name" value="3-oxoacyl-[acyl-carrier-protein] reductase FabG1"/>
    <property type="match status" value="1"/>
</dbReference>
<dbReference type="Gene3D" id="3.40.50.720">
    <property type="entry name" value="NAD(P)-binding Rossmann-like Domain"/>
    <property type="match status" value="1"/>
</dbReference>
<dbReference type="InterPro" id="IPR053419">
    <property type="entry name" value="FAS-II_3-oxoacyl-ACP_reductase"/>
</dbReference>
<dbReference type="InterPro" id="IPR036291">
    <property type="entry name" value="NAD(P)-bd_dom_sf"/>
</dbReference>
<dbReference type="InterPro" id="IPR020904">
    <property type="entry name" value="Sc_DH/Rdtase_CS"/>
</dbReference>
<dbReference type="InterPro" id="IPR050259">
    <property type="entry name" value="SDR"/>
</dbReference>
<dbReference type="InterPro" id="IPR002347">
    <property type="entry name" value="SDR_fam"/>
</dbReference>
<dbReference type="NCBIfam" id="NF040605">
    <property type="entry name" value="mycolic_FabG1"/>
    <property type="match status" value="1"/>
</dbReference>
<dbReference type="NCBIfam" id="NF009466">
    <property type="entry name" value="PRK12826.1-2"/>
    <property type="match status" value="1"/>
</dbReference>
<dbReference type="PANTHER" id="PTHR42879">
    <property type="entry name" value="3-OXOACYL-(ACYL-CARRIER-PROTEIN) REDUCTASE"/>
    <property type="match status" value="1"/>
</dbReference>
<dbReference type="PANTHER" id="PTHR42879:SF2">
    <property type="entry name" value="3-OXOACYL-[ACYL-CARRIER-PROTEIN] REDUCTASE FABG"/>
    <property type="match status" value="1"/>
</dbReference>
<dbReference type="Pfam" id="PF13561">
    <property type="entry name" value="adh_short_C2"/>
    <property type="match status" value="1"/>
</dbReference>
<dbReference type="PRINTS" id="PR00081">
    <property type="entry name" value="GDHRDH"/>
</dbReference>
<dbReference type="PRINTS" id="PR00080">
    <property type="entry name" value="SDRFAMILY"/>
</dbReference>
<dbReference type="SMART" id="SM00822">
    <property type="entry name" value="PKS_KR"/>
    <property type="match status" value="1"/>
</dbReference>
<dbReference type="SUPFAM" id="SSF51735">
    <property type="entry name" value="NAD(P)-binding Rossmann-fold domains"/>
    <property type="match status" value="1"/>
</dbReference>
<dbReference type="PROSITE" id="PS00061">
    <property type="entry name" value="ADH_SHORT"/>
    <property type="match status" value="1"/>
</dbReference>
<name>MABA_MYCTU</name>
<evidence type="ECO:0000250" key="1">
    <source>
        <dbReference type="UniProtKB" id="P71534"/>
    </source>
</evidence>
<evidence type="ECO:0000255" key="2">
    <source>
        <dbReference type="PROSITE-ProRule" id="PRU10001"/>
    </source>
</evidence>
<evidence type="ECO:0000269" key="3">
    <source>
    </source>
</evidence>
<evidence type="ECO:0000269" key="4">
    <source>
    </source>
</evidence>
<evidence type="ECO:0000269" key="5">
    <source>
    </source>
</evidence>
<evidence type="ECO:0000269" key="6">
    <source>
    </source>
</evidence>
<evidence type="ECO:0000269" key="7">
    <source>
    </source>
</evidence>
<evidence type="ECO:0000269" key="8">
    <source>
    </source>
</evidence>
<evidence type="ECO:0000269" key="9">
    <source>
    </source>
</evidence>
<evidence type="ECO:0000269" key="10">
    <source>
    </source>
</evidence>
<evidence type="ECO:0000269" key="11">
    <source>
    </source>
</evidence>
<evidence type="ECO:0000269" key="12">
    <source>
    </source>
</evidence>
<evidence type="ECO:0000269" key="13">
    <source>
    </source>
</evidence>
<evidence type="ECO:0000303" key="14">
    <source>
    </source>
</evidence>
<evidence type="ECO:0000303" key="15">
    <source>
    </source>
</evidence>
<evidence type="ECO:0000305" key="16"/>
<evidence type="ECO:0000305" key="17">
    <source>
    </source>
</evidence>
<evidence type="ECO:0000305" key="18">
    <source>
    </source>
</evidence>
<evidence type="ECO:0000305" key="19">
    <source>
    </source>
</evidence>
<evidence type="ECO:0007744" key="20">
    <source>
        <dbReference type="PDB" id="1UZL"/>
    </source>
</evidence>
<evidence type="ECO:0007744" key="21">
    <source>
        <dbReference type="PDB" id="1UZM"/>
    </source>
</evidence>
<evidence type="ECO:0007744" key="22">
    <source>
        <dbReference type="PDB" id="1UZN"/>
    </source>
</evidence>
<evidence type="ECO:0007744" key="23">
    <source>
        <dbReference type="PDB" id="2NTN"/>
    </source>
</evidence>
<evidence type="ECO:0007744" key="24">
    <source>
    </source>
</evidence>
<evidence type="ECO:0007829" key="25">
    <source>
        <dbReference type="PDB" id="1UZM"/>
    </source>
</evidence>
<evidence type="ECO:0007829" key="26">
    <source>
        <dbReference type="PDB" id="1UZN"/>
    </source>
</evidence>
<organism>
    <name type="scientific">Mycobacterium tuberculosis (strain ATCC 25618 / H37Rv)</name>
    <dbReference type="NCBI Taxonomy" id="83332"/>
    <lineage>
        <taxon>Bacteria</taxon>
        <taxon>Bacillati</taxon>
        <taxon>Actinomycetota</taxon>
        <taxon>Actinomycetes</taxon>
        <taxon>Mycobacteriales</taxon>
        <taxon>Mycobacteriaceae</taxon>
        <taxon>Mycobacterium</taxon>
        <taxon>Mycobacterium tuberculosis complex</taxon>
    </lineage>
</organism>
<proteinExistence type="evidence at protein level"/>
<sequence>MTATATEGAKPPFVSRSVLVTGGNRGIGLAIAQRLAADGHKVAVTHRGSGAPKGLFGVECDVTDSDAVDRAFTAVEEHQGPVEVLVSNAGLSADAFLMRMTEEKFEKVINANLTGAFRVAQRASRSMQRNKFGRMIFIGSVSGSWGIGNQANYAASKAGVIGMARSIARELSKANVTANVVAPGYIDTDMTRALDERIQQGALQFIPAKRVGTPAEVAGVVSFLASEDASYISGAVIPVDGGMGMGH</sequence>